<comment type="function">
    <text evidence="1">Catalyzes the oxidation of 5,10-methylenetetrahydrofolate to 5,10-methenyltetrahydrofolate and then the hydrolysis of 5,10-methenyltetrahydrofolate to 10-formyltetrahydrofolate.</text>
</comment>
<comment type="catalytic activity">
    <reaction evidence="1">
        <text>(6R)-5,10-methylene-5,6,7,8-tetrahydrofolate + NADP(+) = (6R)-5,10-methenyltetrahydrofolate + NADPH</text>
        <dbReference type="Rhea" id="RHEA:22812"/>
        <dbReference type="ChEBI" id="CHEBI:15636"/>
        <dbReference type="ChEBI" id="CHEBI:57455"/>
        <dbReference type="ChEBI" id="CHEBI:57783"/>
        <dbReference type="ChEBI" id="CHEBI:58349"/>
        <dbReference type="EC" id="1.5.1.5"/>
    </reaction>
</comment>
<comment type="catalytic activity">
    <reaction evidence="1">
        <text>(6R)-5,10-methenyltetrahydrofolate + H2O = (6R)-10-formyltetrahydrofolate + H(+)</text>
        <dbReference type="Rhea" id="RHEA:23700"/>
        <dbReference type="ChEBI" id="CHEBI:15377"/>
        <dbReference type="ChEBI" id="CHEBI:15378"/>
        <dbReference type="ChEBI" id="CHEBI:57455"/>
        <dbReference type="ChEBI" id="CHEBI:195366"/>
        <dbReference type="EC" id="3.5.4.9"/>
    </reaction>
</comment>
<comment type="pathway">
    <text evidence="1">One-carbon metabolism; tetrahydrofolate interconversion.</text>
</comment>
<comment type="subunit">
    <text evidence="1">Homodimer.</text>
</comment>
<comment type="similarity">
    <text evidence="1">Belongs to the tetrahydrofolate dehydrogenase/cyclohydrolase family.</text>
</comment>
<reference key="1">
    <citation type="journal article" date="2004" name="Nat. Genet.">
        <title>Evidence in the Legionella pneumophila genome for exploitation of host cell functions and high genome plasticity.</title>
        <authorList>
            <person name="Cazalet C."/>
            <person name="Rusniok C."/>
            <person name="Brueggemann H."/>
            <person name="Zidane N."/>
            <person name="Magnier A."/>
            <person name="Ma L."/>
            <person name="Tichit M."/>
            <person name="Jarraud S."/>
            <person name="Bouchier C."/>
            <person name="Vandenesch F."/>
            <person name="Kunst F."/>
            <person name="Etienne J."/>
            <person name="Glaser P."/>
            <person name="Buchrieser C."/>
        </authorList>
    </citation>
    <scope>NUCLEOTIDE SEQUENCE [LARGE SCALE GENOMIC DNA]</scope>
    <source>
        <strain>Paris</strain>
    </source>
</reference>
<sequence length="284" mass="31624">MPASLIDGREISALRRNELKQRVQHHVGLGQRPPGLAVVLIGNDPASVIYVSNKRKACEEVGITSHSYDLPAETTQEKLIQLINELNQSDKIDGILIQLPLPKHINERTIIEHIKPEKDVDGFHPYNLGRLAQRNPFLRPCTPLGIMNLLHHYELNVKRKHAVVIGASNIVGRPMSLELLLAGATVTICHKFTQQLQKFVEIADFLIVATGKMDVIATDWLREHQVVIDVGMHRLPDGSIRGDIDFKKAVEKVAWITPVPGGVGPMTIVTLLENTMMSAARLRE</sequence>
<protein>
    <recommendedName>
        <fullName evidence="1">Bifunctional protein FolD</fullName>
    </recommendedName>
    <domain>
        <recommendedName>
            <fullName evidence="1">Methylenetetrahydrofolate dehydrogenase</fullName>
            <ecNumber evidence="1">1.5.1.5</ecNumber>
        </recommendedName>
    </domain>
    <domain>
        <recommendedName>
            <fullName evidence="1">Methenyltetrahydrofolate cyclohydrolase</fullName>
            <ecNumber evidence="1">3.5.4.9</ecNumber>
        </recommendedName>
    </domain>
</protein>
<keyword id="KW-0028">Amino-acid biosynthesis</keyword>
<keyword id="KW-0368">Histidine biosynthesis</keyword>
<keyword id="KW-0378">Hydrolase</keyword>
<keyword id="KW-0486">Methionine biosynthesis</keyword>
<keyword id="KW-0511">Multifunctional enzyme</keyword>
<keyword id="KW-0521">NADP</keyword>
<keyword id="KW-0554">One-carbon metabolism</keyword>
<keyword id="KW-0560">Oxidoreductase</keyword>
<keyword id="KW-0658">Purine biosynthesis</keyword>
<name>FOLD_LEGPA</name>
<dbReference type="EC" id="1.5.1.5" evidence="1"/>
<dbReference type="EC" id="3.5.4.9" evidence="1"/>
<dbReference type="EMBL" id="CR628336">
    <property type="protein sequence ID" value="CAH12412.1"/>
    <property type="molecule type" value="Genomic_DNA"/>
</dbReference>
<dbReference type="RefSeq" id="WP_011213610.1">
    <property type="nucleotide sequence ID" value="NC_006368.1"/>
</dbReference>
<dbReference type="SMR" id="Q5X5Q9"/>
<dbReference type="KEGG" id="lpp:lpp1261"/>
<dbReference type="LegioList" id="lpp1261"/>
<dbReference type="HOGENOM" id="CLU_034045_2_1_6"/>
<dbReference type="UniPathway" id="UPA00193"/>
<dbReference type="GO" id="GO:0005829">
    <property type="term" value="C:cytosol"/>
    <property type="evidence" value="ECO:0007669"/>
    <property type="project" value="TreeGrafter"/>
</dbReference>
<dbReference type="GO" id="GO:0004477">
    <property type="term" value="F:methenyltetrahydrofolate cyclohydrolase activity"/>
    <property type="evidence" value="ECO:0007669"/>
    <property type="project" value="UniProtKB-UniRule"/>
</dbReference>
<dbReference type="GO" id="GO:0004488">
    <property type="term" value="F:methylenetetrahydrofolate dehydrogenase (NADP+) activity"/>
    <property type="evidence" value="ECO:0007669"/>
    <property type="project" value="UniProtKB-UniRule"/>
</dbReference>
<dbReference type="GO" id="GO:0000105">
    <property type="term" value="P:L-histidine biosynthetic process"/>
    <property type="evidence" value="ECO:0007669"/>
    <property type="project" value="UniProtKB-KW"/>
</dbReference>
<dbReference type="GO" id="GO:0009086">
    <property type="term" value="P:methionine biosynthetic process"/>
    <property type="evidence" value="ECO:0007669"/>
    <property type="project" value="UniProtKB-KW"/>
</dbReference>
<dbReference type="GO" id="GO:0006164">
    <property type="term" value="P:purine nucleotide biosynthetic process"/>
    <property type="evidence" value="ECO:0007669"/>
    <property type="project" value="UniProtKB-KW"/>
</dbReference>
<dbReference type="GO" id="GO:0035999">
    <property type="term" value="P:tetrahydrofolate interconversion"/>
    <property type="evidence" value="ECO:0007669"/>
    <property type="project" value="UniProtKB-UniRule"/>
</dbReference>
<dbReference type="CDD" id="cd01080">
    <property type="entry name" value="NAD_bind_m-THF_DH_Cyclohyd"/>
    <property type="match status" value="1"/>
</dbReference>
<dbReference type="FunFam" id="3.40.50.10860:FF:000001">
    <property type="entry name" value="Bifunctional protein FolD"/>
    <property type="match status" value="1"/>
</dbReference>
<dbReference type="FunFam" id="3.40.50.720:FF:000006">
    <property type="entry name" value="Bifunctional protein FolD"/>
    <property type="match status" value="1"/>
</dbReference>
<dbReference type="Gene3D" id="3.40.50.10860">
    <property type="entry name" value="Leucine Dehydrogenase, chain A, domain 1"/>
    <property type="match status" value="1"/>
</dbReference>
<dbReference type="Gene3D" id="3.40.50.720">
    <property type="entry name" value="NAD(P)-binding Rossmann-like Domain"/>
    <property type="match status" value="1"/>
</dbReference>
<dbReference type="HAMAP" id="MF_01576">
    <property type="entry name" value="THF_DHG_CYH"/>
    <property type="match status" value="1"/>
</dbReference>
<dbReference type="InterPro" id="IPR046346">
    <property type="entry name" value="Aminoacid_DH-like_N_sf"/>
</dbReference>
<dbReference type="InterPro" id="IPR036291">
    <property type="entry name" value="NAD(P)-bd_dom_sf"/>
</dbReference>
<dbReference type="InterPro" id="IPR000672">
    <property type="entry name" value="THF_DH/CycHdrlase"/>
</dbReference>
<dbReference type="InterPro" id="IPR020630">
    <property type="entry name" value="THF_DH/CycHdrlase_cat_dom"/>
</dbReference>
<dbReference type="InterPro" id="IPR020867">
    <property type="entry name" value="THF_DH/CycHdrlase_CS"/>
</dbReference>
<dbReference type="InterPro" id="IPR020631">
    <property type="entry name" value="THF_DH/CycHdrlase_NAD-bd_dom"/>
</dbReference>
<dbReference type="NCBIfam" id="NF008058">
    <property type="entry name" value="PRK10792.1"/>
    <property type="match status" value="1"/>
</dbReference>
<dbReference type="NCBIfam" id="NF010783">
    <property type="entry name" value="PRK14186.1"/>
    <property type="match status" value="1"/>
</dbReference>
<dbReference type="PANTHER" id="PTHR48099:SF5">
    <property type="entry name" value="C-1-TETRAHYDROFOLATE SYNTHASE, CYTOPLASMIC"/>
    <property type="match status" value="1"/>
</dbReference>
<dbReference type="PANTHER" id="PTHR48099">
    <property type="entry name" value="C-1-TETRAHYDROFOLATE SYNTHASE, CYTOPLASMIC-RELATED"/>
    <property type="match status" value="1"/>
</dbReference>
<dbReference type="Pfam" id="PF00763">
    <property type="entry name" value="THF_DHG_CYH"/>
    <property type="match status" value="1"/>
</dbReference>
<dbReference type="Pfam" id="PF02882">
    <property type="entry name" value="THF_DHG_CYH_C"/>
    <property type="match status" value="1"/>
</dbReference>
<dbReference type="PRINTS" id="PR00085">
    <property type="entry name" value="THFDHDRGNASE"/>
</dbReference>
<dbReference type="SUPFAM" id="SSF53223">
    <property type="entry name" value="Aminoacid dehydrogenase-like, N-terminal domain"/>
    <property type="match status" value="1"/>
</dbReference>
<dbReference type="SUPFAM" id="SSF51735">
    <property type="entry name" value="NAD(P)-binding Rossmann-fold domains"/>
    <property type="match status" value="1"/>
</dbReference>
<dbReference type="PROSITE" id="PS00766">
    <property type="entry name" value="THF_DHG_CYH_1"/>
    <property type="match status" value="1"/>
</dbReference>
<dbReference type="PROSITE" id="PS00767">
    <property type="entry name" value="THF_DHG_CYH_2"/>
    <property type="match status" value="1"/>
</dbReference>
<evidence type="ECO:0000255" key="1">
    <source>
        <dbReference type="HAMAP-Rule" id="MF_01576"/>
    </source>
</evidence>
<gene>
    <name evidence="1" type="primary">folD</name>
    <name type="ordered locus">lpp1261</name>
</gene>
<feature type="chain" id="PRO_0000268383" description="Bifunctional protein FolD">
    <location>
        <begin position="1"/>
        <end position="284"/>
    </location>
</feature>
<feature type="binding site" evidence="1">
    <location>
        <begin position="166"/>
        <end position="168"/>
    </location>
    <ligand>
        <name>NADP(+)</name>
        <dbReference type="ChEBI" id="CHEBI:58349"/>
    </ligand>
</feature>
<accession>Q5X5Q9</accession>
<organism>
    <name type="scientific">Legionella pneumophila (strain Paris)</name>
    <dbReference type="NCBI Taxonomy" id="297246"/>
    <lineage>
        <taxon>Bacteria</taxon>
        <taxon>Pseudomonadati</taxon>
        <taxon>Pseudomonadota</taxon>
        <taxon>Gammaproteobacteria</taxon>
        <taxon>Legionellales</taxon>
        <taxon>Legionellaceae</taxon>
        <taxon>Legionella</taxon>
    </lineage>
</organism>
<proteinExistence type="inferred from homology"/>